<comment type="function">
    <text evidence="1">Found in functional membrane microdomains (FMM) that may be equivalent to eukaryotic membrane rafts. FMMs are highly dynamic and increase in number as cells age. Flotillins are thought to be important factors in membrane fluidity.</text>
</comment>
<comment type="subunit">
    <text evidence="1">Homooligomerizes.</text>
</comment>
<comment type="subcellular location">
    <subcellularLocation>
        <location evidence="1">Cell membrane</location>
        <topology evidence="1">Multi-pass membrane protein</topology>
    </subcellularLocation>
    <subcellularLocation>
        <location evidence="1">Membrane raft</location>
        <topology evidence="1">Multi-pass membrane protein</topology>
    </subcellularLocation>
</comment>
<comment type="similarity">
    <text evidence="1">Belongs to the flotillin-like FloA family.</text>
</comment>
<keyword id="KW-1003">Cell membrane</keyword>
<keyword id="KW-0472">Membrane</keyword>
<keyword id="KW-1185">Reference proteome</keyword>
<keyword id="KW-0812">Transmembrane</keyword>
<keyword id="KW-1133">Transmembrane helix</keyword>
<proteinExistence type="inferred from homology"/>
<feature type="chain" id="PRO_1000185439" description="Flotillin-like protein FloA">
    <location>
        <begin position="1"/>
        <end position="326"/>
    </location>
</feature>
<feature type="transmembrane region" description="Helical" evidence="1">
    <location>
        <begin position="6"/>
        <end position="26"/>
    </location>
</feature>
<feature type="transmembrane region" description="Helical" evidence="1">
    <location>
        <begin position="27"/>
        <end position="47"/>
    </location>
</feature>
<reference key="1">
    <citation type="submission" date="2007-10" db="EMBL/GenBank/DDBJ databases">
        <title>Complete sequence of Desulfococcus oleovorans Hxd3.</title>
        <authorList>
            <consortium name="US DOE Joint Genome Institute"/>
            <person name="Copeland A."/>
            <person name="Lucas S."/>
            <person name="Lapidus A."/>
            <person name="Barry K."/>
            <person name="Glavina del Rio T."/>
            <person name="Dalin E."/>
            <person name="Tice H."/>
            <person name="Pitluck S."/>
            <person name="Kiss H."/>
            <person name="Brettin T."/>
            <person name="Bruce D."/>
            <person name="Detter J.C."/>
            <person name="Han C."/>
            <person name="Schmutz J."/>
            <person name="Larimer F."/>
            <person name="Land M."/>
            <person name="Hauser L."/>
            <person name="Kyrpides N."/>
            <person name="Kim E."/>
            <person name="Wawrik B."/>
            <person name="Richardson P."/>
        </authorList>
    </citation>
    <scope>NUCLEOTIDE SEQUENCE [LARGE SCALE GENOMIC DNA]</scope>
    <source>
        <strain>DSM 6200 / JCM 39069 / Hxd3</strain>
    </source>
</reference>
<organism>
    <name type="scientific">Desulfosudis oleivorans (strain DSM 6200 / JCM 39069 / Hxd3)</name>
    <name type="common">Desulfococcus oleovorans</name>
    <dbReference type="NCBI Taxonomy" id="96561"/>
    <lineage>
        <taxon>Bacteria</taxon>
        <taxon>Pseudomonadati</taxon>
        <taxon>Thermodesulfobacteriota</taxon>
        <taxon>Desulfobacteria</taxon>
        <taxon>Desulfobacterales</taxon>
        <taxon>Desulfosudaceae</taxon>
        <taxon>Desulfosudis</taxon>
    </lineage>
</organism>
<sequence length="326" mass="35588">MNPNYIILFFLVVAVIVLFYFVGSSVSLWIQALVSGARVGLLNIVFMRFRKVPPKLIVESKIMATKAGLDISSDELESHYLAGGNVSRVVQALIAADKAKIELSFNRSAAIDLAGRDVLEAVQMSVNPKVIETPMIAAMAKDGIQLKAISRVTVRANIDRLVGGAGEETILARVGEGIVTTIGSADSHKHVLENPDLISKRVLEKGLDSGTAFEILSIDIADVDVGKNIGAELETDRAEADKKIAQAKAEERRAMAYAREQEMKAQVEEMRAKVVEAEAKIPLAMANAFEKGNLGIMDYYRMKNIMADTQMRDTIGSPDRETPREK</sequence>
<evidence type="ECO:0000255" key="1">
    <source>
        <dbReference type="HAMAP-Rule" id="MF_01562"/>
    </source>
</evidence>
<dbReference type="EMBL" id="CP000859">
    <property type="protein sequence ID" value="ABW65828.1"/>
    <property type="molecule type" value="Genomic_DNA"/>
</dbReference>
<dbReference type="RefSeq" id="WP_012173447.1">
    <property type="nucleotide sequence ID" value="NC_009943.1"/>
</dbReference>
<dbReference type="SMR" id="A8ZRR1"/>
<dbReference type="STRING" id="96561.Dole_0018"/>
<dbReference type="KEGG" id="dol:Dole_0018"/>
<dbReference type="eggNOG" id="COG4864">
    <property type="taxonomic scope" value="Bacteria"/>
</dbReference>
<dbReference type="HOGENOM" id="CLU_836378_0_0_7"/>
<dbReference type="OrthoDB" id="9808365at2"/>
<dbReference type="Proteomes" id="UP000008561">
    <property type="component" value="Chromosome"/>
</dbReference>
<dbReference type="GO" id="GO:0045121">
    <property type="term" value="C:membrane raft"/>
    <property type="evidence" value="ECO:0007669"/>
    <property type="project" value="UniProtKB-SubCell"/>
</dbReference>
<dbReference type="GO" id="GO:0005886">
    <property type="term" value="C:plasma membrane"/>
    <property type="evidence" value="ECO:0007669"/>
    <property type="project" value="UniProtKB-SubCell"/>
</dbReference>
<dbReference type="HAMAP" id="MF_01562">
    <property type="entry name" value="FloA"/>
    <property type="match status" value="1"/>
</dbReference>
<dbReference type="InterPro" id="IPR022853">
    <property type="entry name" value="FloA"/>
</dbReference>
<dbReference type="NCBIfam" id="NF010186">
    <property type="entry name" value="PRK13665.1"/>
    <property type="match status" value="1"/>
</dbReference>
<dbReference type="Pfam" id="PF12127">
    <property type="entry name" value="FloA"/>
    <property type="match status" value="1"/>
</dbReference>
<gene>
    <name evidence="1" type="primary">floA</name>
    <name type="ordered locus">Dole_0018</name>
</gene>
<name>FLOA_DESOH</name>
<protein>
    <recommendedName>
        <fullName evidence="1">Flotillin-like protein FloA</fullName>
    </recommendedName>
</protein>
<accession>A8ZRR1</accession>